<organism>
    <name type="scientific">Maridesulfovibrio salexigens (strain ATCC 14822 / DSM 2638 / NCIMB 8403 / VKM B-1763)</name>
    <name type="common">Desulfovibrio salexigens</name>
    <dbReference type="NCBI Taxonomy" id="526222"/>
    <lineage>
        <taxon>Bacteria</taxon>
        <taxon>Pseudomonadati</taxon>
        <taxon>Thermodesulfobacteriota</taxon>
        <taxon>Desulfovibrionia</taxon>
        <taxon>Desulfovibrionales</taxon>
        <taxon>Desulfovibrionaceae</taxon>
        <taxon>Maridesulfovibrio</taxon>
    </lineage>
</organism>
<proteinExistence type="inferred from homology"/>
<evidence type="ECO:0000255" key="1">
    <source>
        <dbReference type="HAMAP-Rule" id="MF_01364"/>
    </source>
</evidence>
<evidence type="ECO:0000305" key="2"/>
<accession>C6C198</accession>
<keyword id="KW-0479">Metal-binding</keyword>
<keyword id="KW-1185">Reference proteome</keyword>
<keyword id="KW-0687">Ribonucleoprotein</keyword>
<keyword id="KW-0689">Ribosomal protein</keyword>
<keyword id="KW-0694">RNA-binding</keyword>
<keyword id="KW-0699">rRNA-binding</keyword>
<keyword id="KW-0862">Zinc</keyword>
<name>RS14Z_MARSD</name>
<feature type="chain" id="PRO_1000214909" description="Small ribosomal subunit protein uS14">
    <location>
        <begin position="1"/>
        <end position="61"/>
    </location>
</feature>
<feature type="binding site" evidence="1">
    <location>
        <position position="24"/>
    </location>
    <ligand>
        <name>Zn(2+)</name>
        <dbReference type="ChEBI" id="CHEBI:29105"/>
    </ligand>
</feature>
<feature type="binding site" evidence="1">
    <location>
        <position position="27"/>
    </location>
    <ligand>
        <name>Zn(2+)</name>
        <dbReference type="ChEBI" id="CHEBI:29105"/>
    </ligand>
</feature>
<feature type="binding site" evidence="1">
    <location>
        <position position="40"/>
    </location>
    <ligand>
        <name>Zn(2+)</name>
        <dbReference type="ChEBI" id="CHEBI:29105"/>
    </ligand>
</feature>
<feature type="binding site" evidence="1">
    <location>
        <position position="43"/>
    </location>
    <ligand>
        <name>Zn(2+)</name>
        <dbReference type="ChEBI" id="CHEBI:29105"/>
    </ligand>
</feature>
<gene>
    <name evidence="1" type="primary">rpsZ</name>
    <name evidence="1" type="synonym">rpsN</name>
    <name type="ordered locus">Desal_1198</name>
</gene>
<reference key="1">
    <citation type="submission" date="2009-06" db="EMBL/GenBank/DDBJ databases">
        <title>Complete sequence of Desulfovibrio salexigens DSM 2638.</title>
        <authorList>
            <consortium name="US DOE Joint Genome Institute"/>
            <person name="Lucas S."/>
            <person name="Copeland A."/>
            <person name="Lapidus A."/>
            <person name="Glavina del Rio T."/>
            <person name="Tice H."/>
            <person name="Bruce D."/>
            <person name="Goodwin L."/>
            <person name="Pitluck S."/>
            <person name="Munk A.C."/>
            <person name="Brettin T."/>
            <person name="Detter J.C."/>
            <person name="Han C."/>
            <person name="Tapia R."/>
            <person name="Larimer F."/>
            <person name="Land M."/>
            <person name="Hauser L."/>
            <person name="Kyrpides N."/>
            <person name="Anderson I."/>
            <person name="Wall J.D."/>
            <person name="Arkin A.P."/>
            <person name="Dehal P."/>
            <person name="Chivian D."/>
            <person name="Giles B."/>
            <person name="Hazen T.C."/>
        </authorList>
    </citation>
    <scope>NUCLEOTIDE SEQUENCE [LARGE SCALE GENOMIC DNA]</scope>
    <source>
        <strain>ATCC 14822 / DSM 2638 / NCIMB 8403 / VKM B-1763</strain>
    </source>
</reference>
<dbReference type="EMBL" id="CP001649">
    <property type="protein sequence ID" value="ACS79261.1"/>
    <property type="molecule type" value="Genomic_DNA"/>
</dbReference>
<dbReference type="RefSeq" id="WP_015337847.1">
    <property type="nucleotide sequence ID" value="NC_012881.1"/>
</dbReference>
<dbReference type="SMR" id="C6C198"/>
<dbReference type="STRING" id="526222.Desal_1198"/>
<dbReference type="KEGG" id="dsa:Desal_1198"/>
<dbReference type="eggNOG" id="COG0199">
    <property type="taxonomic scope" value="Bacteria"/>
</dbReference>
<dbReference type="HOGENOM" id="CLU_139869_3_0_7"/>
<dbReference type="OrthoDB" id="9810484at2"/>
<dbReference type="Proteomes" id="UP000002601">
    <property type="component" value="Chromosome"/>
</dbReference>
<dbReference type="GO" id="GO:0005737">
    <property type="term" value="C:cytoplasm"/>
    <property type="evidence" value="ECO:0007669"/>
    <property type="project" value="UniProtKB-ARBA"/>
</dbReference>
<dbReference type="GO" id="GO:0015935">
    <property type="term" value="C:small ribosomal subunit"/>
    <property type="evidence" value="ECO:0007669"/>
    <property type="project" value="TreeGrafter"/>
</dbReference>
<dbReference type="GO" id="GO:0019843">
    <property type="term" value="F:rRNA binding"/>
    <property type="evidence" value="ECO:0007669"/>
    <property type="project" value="UniProtKB-UniRule"/>
</dbReference>
<dbReference type="GO" id="GO:0003735">
    <property type="term" value="F:structural constituent of ribosome"/>
    <property type="evidence" value="ECO:0007669"/>
    <property type="project" value="InterPro"/>
</dbReference>
<dbReference type="GO" id="GO:0008270">
    <property type="term" value="F:zinc ion binding"/>
    <property type="evidence" value="ECO:0007669"/>
    <property type="project" value="UniProtKB-UniRule"/>
</dbReference>
<dbReference type="GO" id="GO:0006412">
    <property type="term" value="P:translation"/>
    <property type="evidence" value="ECO:0007669"/>
    <property type="project" value="UniProtKB-UniRule"/>
</dbReference>
<dbReference type="FunFam" id="4.10.830.10:FF:000001">
    <property type="entry name" value="30S ribosomal protein S14 type Z"/>
    <property type="match status" value="1"/>
</dbReference>
<dbReference type="Gene3D" id="4.10.830.10">
    <property type="entry name" value="30s Ribosomal Protein S14, Chain N"/>
    <property type="match status" value="1"/>
</dbReference>
<dbReference type="HAMAP" id="MF_01364_B">
    <property type="entry name" value="Ribosomal_uS14_2_B"/>
    <property type="match status" value="1"/>
</dbReference>
<dbReference type="InterPro" id="IPR001209">
    <property type="entry name" value="Ribosomal_uS14"/>
</dbReference>
<dbReference type="InterPro" id="IPR023053">
    <property type="entry name" value="Ribosomal_uS14_bact"/>
</dbReference>
<dbReference type="InterPro" id="IPR043140">
    <property type="entry name" value="Ribosomal_uS14_sf"/>
</dbReference>
<dbReference type="NCBIfam" id="NF005974">
    <property type="entry name" value="PRK08061.1"/>
    <property type="match status" value="1"/>
</dbReference>
<dbReference type="PANTHER" id="PTHR19836">
    <property type="entry name" value="30S RIBOSOMAL PROTEIN S14"/>
    <property type="match status" value="1"/>
</dbReference>
<dbReference type="PANTHER" id="PTHR19836:SF19">
    <property type="entry name" value="SMALL RIBOSOMAL SUBUNIT PROTEIN US14M"/>
    <property type="match status" value="1"/>
</dbReference>
<dbReference type="Pfam" id="PF00253">
    <property type="entry name" value="Ribosomal_S14"/>
    <property type="match status" value="1"/>
</dbReference>
<dbReference type="SUPFAM" id="SSF57716">
    <property type="entry name" value="Glucocorticoid receptor-like (DNA-binding domain)"/>
    <property type="match status" value="1"/>
</dbReference>
<comment type="function">
    <text evidence="1">Binds 16S rRNA, required for the assembly of 30S particles and may also be responsible for determining the conformation of the 16S rRNA at the A site.</text>
</comment>
<comment type="cofactor">
    <cofactor evidence="1">
        <name>Zn(2+)</name>
        <dbReference type="ChEBI" id="CHEBI:29105"/>
    </cofactor>
    <text evidence="1">Binds 1 zinc ion per subunit.</text>
</comment>
<comment type="subunit">
    <text evidence="1">Part of the 30S ribosomal subunit. Contacts proteins S3 and S10.</text>
</comment>
<comment type="similarity">
    <text evidence="1">Belongs to the universal ribosomal protein uS14 family. Zinc-binding uS14 subfamily.</text>
</comment>
<protein>
    <recommendedName>
        <fullName evidence="1">Small ribosomal subunit protein uS14</fullName>
    </recommendedName>
    <alternativeName>
        <fullName evidence="2">30S ribosomal protein S14 type Z</fullName>
    </alternativeName>
</protein>
<sequence>MARTALKVKAKRKPKFKVREYNRCPICGRPRAFLRKYGICRICFREKALAGELPGVRKASW</sequence>